<dbReference type="EC" id="2.4.1.-" evidence="5"/>
<dbReference type="EMBL" id="X71060">
    <property type="protein sequence ID" value="CAA50377.1"/>
    <property type="molecule type" value="Genomic_DNA"/>
</dbReference>
<dbReference type="EMBL" id="X71059">
    <property type="protein sequence ID" value="CAA50376.1"/>
    <property type="molecule type" value="mRNA"/>
</dbReference>
<dbReference type="EMBL" id="Z25802">
    <property type="protein sequence ID" value="CAA81057.1"/>
    <property type="molecule type" value="mRNA"/>
</dbReference>
<dbReference type="PIR" id="S36655">
    <property type="entry name" value="S36655"/>
</dbReference>
<dbReference type="PIR" id="S60290">
    <property type="entry name" value="S60290"/>
</dbReference>
<dbReference type="SMR" id="Q43716"/>
<dbReference type="CAZy" id="GT1">
    <property type="family name" value="Glycosyltransferase Family 1"/>
</dbReference>
<dbReference type="UniPathway" id="UPA00009"/>
<dbReference type="GO" id="GO:0051566">
    <property type="term" value="F:anthocyanidin 3-glucoside rhamnosyltransferase activity"/>
    <property type="evidence" value="ECO:0000315"/>
    <property type="project" value="UniProtKB"/>
</dbReference>
<dbReference type="GO" id="GO:0035251">
    <property type="term" value="F:UDP-glucosyltransferase activity"/>
    <property type="evidence" value="ECO:0007669"/>
    <property type="project" value="InterPro"/>
</dbReference>
<dbReference type="GO" id="GO:0009718">
    <property type="term" value="P:anthocyanin-containing compound biosynthetic process"/>
    <property type="evidence" value="ECO:0000315"/>
    <property type="project" value="UniProtKB"/>
</dbReference>
<dbReference type="CDD" id="cd03784">
    <property type="entry name" value="GT1_Gtf-like"/>
    <property type="match status" value="1"/>
</dbReference>
<dbReference type="FunFam" id="3.40.50.2000:FF:000037">
    <property type="entry name" value="Glycosyltransferase"/>
    <property type="match status" value="1"/>
</dbReference>
<dbReference type="FunFam" id="3.40.50.2000:FF:000087">
    <property type="entry name" value="Glycosyltransferase"/>
    <property type="match status" value="1"/>
</dbReference>
<dbReference type="Gene3D" id="3.40.50.2000">
    <property type="entry name" value="Glycogen Phosphorylase B"/>
    <property type="match status" value="2"/>
</dbReference>
<dbReference type="InterPro" id="IPR050481">
    <property type="entry name" value="UDP-glycosyltransf_plant"/>
</dbReference>
<dbReference type="InterPro" id="IPR002213">
    <property type="entry name" value="UDP_glucos_trans"/>
</dbReference>
<dbReference type="InterPro" id="IPR035595">
    <property type="entry name" value="UDP_glycos_trans_CS"/>
</dbReference>
<dbReference type="PANTHER" id="PTHR48049">
    <property type="entry name" value="GLYCOSYLTRANSFERASE"/>
    <property type="match status" value="1"/>
</dbReference>
<dbReference type="PANTHER" id="PTHR48049:SF84">
    <property type="entry name" value="UDP-GLYCOSYLTRANSFERASE 79A6"/>
    <property type="match status" value="1"/>
</dbReference>
<dbReference type="Pfam" id="PF00201">
    <property type="entry name" value="UDPGT"/>
    <property type="match status" value="1"/>
</dbReference>
<dbReference type="SUPFAM" id="SSF53756">
    <property type="entry name" value="UDP-Glycosyltransferase/glycogen phosphorylase"/>
    <property type="match status" value="1"/>
</dbReference>
<dbReference type="PROSITE" id="PS00375">
    <property type="entry name" value="UDPGT"/>
    <property type="match status" value="1"/>
</dbReference>
<reference key="1">
    <citation type="journal article" date="1994" name="Plant J.">
        <title>Cloning and structural analysis of the anthocyanin pigmentation locus Rt of Petunia hybrida: characterization of insertion sequences in two mutant alleles.</title>
        <authorList>
            <person name="Kroon J."/>
            <person name="Souer E."/>
            <person name="de Graaff A."/>
            <person name="Xue Y."/>
            <person name="Mol J."/>
            <person name="Koes R."/>
        </authorList>
    </citation>
    <scope>NUCLEOTIDE SEQUENCE [GENOMIC DNA / MRNA]</scope>
    <scope>FUNCTION</scope>
    <source>
        <strain>cv. Violet 26</strain>
        <tissue>Leaf</tissue>
    </source>
</reference>
<reference key="2">
    <citation type="journal article" date="1994" name="Plant J.">
        <title>Isolation and characterization of a cDNA clone corresponding to the Rt locus of Petunia hybrida.</title>
        <authorList>
            <person name="Brugliera F."/>
            <person name="Holton T.A."/>
            <person name="Stevenson T.W."/>
            <person name="Farcy E."/>
            <person name="Lu C.Y."/>
            <person name="Cornish E.C."/>
        </authorList>
    </citation>
    <scope>NUCLEOTIDE SEQUENCE [MRNA] OF 3-473</scope>
    <scope>FUNCTION</scope>
    <scope>TISSUE SPECIFICITY</scope>
    <scope>DEVELOPMENTAL STAGE</scope>
    <source>
        <strain>cv. Old Glory Blue</strain>
        <tissue>Petal</tissue>
    </source>
</reference>
<organism>
    <name type="scientific">Petunia hybrida</name>
    <name type="common">Petunia</name>
    <dbReference type="NCBI Taxonomy" id="4102"/>
    <lineage>
        <taxon>Eukaryota</taxon>
        <taxon>Viridiplantae</taxon>
        <taxon>Streptophyta</taxon>
        <taxon>Embryophyta</taxon>
        <taxon>Tracheophyta</taxon>
        <taxon>Spermatophyta</taxon>
        <taxon>Magnoliopsida</taxon>
        <taxon>eudicotyledons</taxon>
        <taxon>Gunneridae</taxon>
        <taxon>Pentapetalae</taxon>
        <taxon>asterids</taxon>
        <taxon>lamiids</taxon>
        <taxon>Solanales</taxon>
        <taxon>Solanaceae</taxon>
        <taxon>Petunioideae</taxon>
        <taxon>Petunia</taxon>
    </lineage>
</organism>
<accession>Q43716</accession>
<accession>Q40895</accession>
<comment type="function">
    <text evidence="1 2">Controls the rhamnosylation of reddish anthocyanidin-3-O-glucosides, which is the first step in a series of modifications that finally yield magenta or blue/purple coloured anthocyanins (PubMed:8130799, PubMed:8130800). Controls the conversion of anthocyanidin-3-O-glucosides to anthocyanidin-3-O-rutinosides (PubMed:8130800).</text>
</comment>
<comment type="pathway">
    <text evidence="5">Pigment biosynthesis; anthocyanin biosynthesis.</text>
</comment>
<comment type="tissue specificity">
    <text evidence="2">Expressed in petals, styles and anthers.</text>
</comment>
<comment type="developmental stage">
    <text evidence="2">Expressed at high levels in petals from flowers at an early stage of development, and expression levels decline as the flower matures.</text>
</comment>
<comment type="similarity">
    <text evidence="5">Belongs to the UDP-glycosyltransferase family.</text>
</comment>
<evidence type="ECO:0000269" key="1">
    <source>
    </source>
</evidence>
<evidence type="ECO:0000269" key="2">
    <source>
    </source>
</evidence>
<evidence type="ECO:0000303" key="3">
    <source>
    </source>
</evidence>
<evidence type="ECO:0000303" key="4">
    <source>
    </source>
</evidence>
<evidence type="ECO:0000305" key="5"/>
<gene>
    <name evidence="3" type="primary">RT</name>
    <name evidence="5" type="synonym">UGT72</name>
</gene>
<sequence length="473" mass="52406">MENEMKHSNDALHVVMFPFFAFGHISPFVQLANKLSSYGVKVSFFTASGNASRVKSMLNSAPTTHIVPLTLPHVEGLPPGAESTAELTPASAELLKVALDLMQPQIKTLLSHLKPHFVLFDFAQEWLPKMANGLGIKTVYYSVVVALSTAFLTCPARVLEPKKYPSLEDMKKPPLGFPQTSVTSVRTFEARDFLYVFKSFHNGPTLYDRIQSGLRGCSAILAKTCSQMEGPYIKYVEAQFNKPVFLIGPVVPDPPSGKLEEKWATWLNKFEGGTVIYCSFGSETFLTDDQVKELALGLEQTGLPFFLVLNFPANVDVSAELNRALPEGFLERVKDKGIIHSGWVQQQNILAHSSVGCYVCHAGFSSVIEALVNDCQVVMLPQKGDQILNAKLVSGDMEAGVEINRRDEDGYFGKEDIKEAVEKVMVDVEKDPGKLIRENQKKWKEFLLNKDIQSKYIGNLVNEMTAMAKVSTT</sequence>
<feature type="chain" id="PRO_0000074149" description="Anthocyanidin-3-O-glucoside rhamnosyltransferase">
    <location>
        <begin position="1"/>
        <end position="473"/>
    </location>
</feature>
<feature type="sequence conflict" description="In Ref. 1; CAA50377." evidence="5" ref="1">
    <original>LIGPVVPDPP</original>
    <variation>SNRTRSSGPA</variation>
    <location>
        <begin position="246"/>
        <end position="255"/>
    </location>
</feature>
<feature type="sequence conflict" description="In Ref. 2; CAA81057." evidence="5" ref="2">
    <original>N</original>
    <variation>H</variation>
    <location>
        <position position="348"/>
    </location>
</feature>
<feature type="sequence conflict" description="In Ref. 2; CAA81057." evidence="5" ref="2">
    <original>D</original>
    <variation>E</variation>
    <location>
        <position position="431"/>
    </location>
</feature>
<protein>
    <recommendedName>
        <fullName evidence="4">Anthocyanidin-3-O-glucoside rhamnosyltransferase</fullName>
        <ecNumber evidence="5">2.4.1.-</ecNumber>
    </recommendedName>
    <alternativeName>
        <fullName evidence="3">Anthocyanin rhamnosyl transferase</fullName>
    </alternativeName>
</protein>
<keyword id="KW-0328">Glycosyltransferase</keyword>
<keyword id="KW-0808">Transferase</keyword>
<proteinExistence type="evidence at transcript level"/>
<name>UFOG_PETHY</name>